<dbReference type="EC" id="2.5.1.41" evidence="1"/>
<dbReference type="EMBL" id="CP000575">
    <property type="protein sequence ID" value="ABN70091.1"/>
    <property type="molecule type" value="Genomic_DNA"/>
</dbReference>
<dbReference type="RefSeq" id="WP_011839282.1">
    <property type="nucleotide sequence ID" value="NC_009033.1"/>
</dbReference>
<dbReference type="SMR" id="A3DN81"/>
<dbReference type="STRING" id="399550.Smar_0993"/>
<dbReference type="GeneID" id="4908007"/>
<dbReference type="KEGG" id="smr:Smar_0993"/>
<dbReference type="eggNOG" id="arCOG01085">
    <property type="taxonomic scope" value="Archaea"/>
</dbReference>
<dbReference type="HOGENOM" id="CLU_068610_0_0_2"/>
<dbReference type="OrthoDB" id="7409at2157"/>
<dbReference type="UniPathway" id="UPA00940"/>
<dbReference type="Proteomes" id="UP000000254">
    <property type="component" value="Chromosome"/>
</dbReference>
<dbReference type="GO" id="GO:0005737">
    <property type="term" value="C:cytoplasm"/>
    <property type="evidence" value="ECO:0007669"/>
    <property type="project" value="UniProtKB-SubCell"/>
</dbReference>
<dbReference type="GO" id="GO:0000287">
    <property type="term" value="F:magnesium ion binding"/>
    <property type="evidence" value="ECO:0007669"/>
    <property type="project" value="UniProtKB-UniRule"/>
</dbReference>
<dbReference type="GO" id="GO:0047294">
    <property type="term" value="F:phosphoglycerol geranylgeranyltransferase activity"/>
    <property type="evidence" value="ECO:0007669"/>
    <property type="project" value="UniProtKB-UniRule"/>
</dbReference>
<dbReference type="GO" id="GO:0046474">
    <property type="term" value="P:glycerophospholipid biosynthetic process"/>
    <property type="evidence" value="ECO:0007669"/>
    <property type="project" value="UniProtKB-UniRule"/>
</dbReference>
<dbReference type="CDD" id="cd02812">
    <property type="entry name" value="PcrB_like"/>
    <property type="match status" value="1"/>
</dbReference>
<dbReference type="Gene3D" id="3.20.20.390">
    <property type="entry name" value="FMN-linked oxidoreductases"/>
    <property type="match status" value="1"/>
</dbReference>
<dbReference type="HAMAP" id="MF_00112">
    <property type="entry name" value="GGGP_HepGP_synthase"/>
    <property type="match status" value="1"/>
</dbReference>
<dbReference type="InterPro" id="IPR039074">
    <property type="entry name" value="GGGP/HepGP_synthase_I"/>
</dbReference>
<dbReference type="InterPro" id="IPR038597">
    <property type="entry name" value="GGGP/HepGP_synthase_sf"/>
</dbReference>
<dbReference type="InterPro" id="IPR008205">
    <property type="entry name" value="GGGP_HepGP_synthase"/>
</dbReference>
<dbReference type="InterPro" id="IPR010946">
    <property type="entry name" value="GGGP_synth"/>
</dbReference>
<dbReference type="NCBIfam" id="TIGR01769">
    <property type="entry name" value="GGGP"/>
    <property type="match status" value="1"/>
</dbReference>
<dbReference type="NCBIfam" id="TIGR01768">
    <property type="entry name" value="GGGP-family"/>
    <property type="match status" value="1"/>
</dbReference>
<dbReference type="NCBIfam" id="NF003198">
    <property type="entry name" value="PRK04169.1-2"/>
    <property type="match status" value="1"/>
</dbReference>
<dbReference type="PANTHER" id="PTHR40029">
    <property type="match status" value="1"/>
</dbReference>
<dbReference type="PANTHER" id="PTHR40029:SF2">
    <property type="entry name" value="HEPTAPRENYLGLYCERYL PHOSPHATE SYNTHASE"/>
    <property type="match status" value="1"/>
</dbReference>
<dbReference type="Pfam" id="PF01884">
    <property type="entry name" value="PcrB"/>
    <property type="match status" value="1"/>
</dbReference>
<dbReference type="SUPFAM" id="SSF51395">
    <property type="entry name" value="FMN-linked oxidoreductases"/>
    <property type="match status" value="1"/>
</dbReference>
<protein>
    <recommendedName>
        <fullName evidence="1">Geranylgeranylglyceryl phosphate synthase</fullName>
        <shortName evidence="1">GGGP synthase</shortName>
        <shortName evidence="1">GGGPS</shortName>
        <ecNumber evidence="1">2.5.1.41</ecNumber>
    </recommendedName>
    <alternativeName>
        <fullName evidence="1">(S)-3-O-geranylgeranylglyceryl phosphate synthase</fullName>
    </alternativeName>
    <alternativeName>
        <fullName evidence="1">Phosphoglycerol geranylgeranyltransferase</fullName>
    </alternativeName>
</protein>
<name>GGGPS_STAMF</name>
<sequence length="245" mass="26533">MGKVNKYIVEKINNGEKLHFTLIDPDRVNDLGKLEETAIKMAEFGTDAFLIGGSLGVTPEEAGETAKILKKTGLPVIIFPGNINCLTPYADAVLFMILMNSMEQYYLMHAQIAAAPIIKKYKLETLPTGYIVIYGETAVAHVGRTYPIPVSKPEILLSYTWAAEMIGIKYIYLEAGSGSPKPVPPSFPAIVKKYTNLITIVGGGIRSPFIAKELASSGADIIVTGTIVEEDPDKASKIISAIKKN</sequence>
<organism>
    <name type="scientific">Staphylothermus marinus (strain ATCC 43588 / DSM 3639 / JCM 9404 / F1)</name>
    <dbReference type="NCBI Taxonomy" id="399550"/>
    <lineage>
        <taxon>Archaea</taxon>
        <taxon>Thermoproteota</taxon>
        <taxon>Thermoprotei</taxon>
        <taxon>Desulfurococcales</taxon>
        <taxon>Desulfurococcaceae</taxon>
        <taxon>Staphylothermus</taxon>
    </lineage>
</organism>
<proteinExistence type="inferred from homology"/>
<reference key="1">
    <citation type="journal article" date="2009" name="BMC Genomics">
        <title>The complete genome sequence of Staphylothermus marinus reveals differences in sulfur metabolism among heterotrophic Crenarchaeota.</title>
        <authorList>
            <person name="Anderson I.J."/>
            <person name="Dharmarajan L."/>
            <person name="Rodriguez J."/>
            <person name="Hooper S."/>
            <person name="Porat I."/>
            <person name="Ulrich L.E."/>
            <person name="Elkins J.G."/>
            <person name="Mavromatis K."/>
            <person name="Sun H."/>
            <person name="Land M."/>
            <person name="Lapidus A."/>
            <person name="Lucas S."/>
            <person name="Barry K."/>
            <person name="Huber H."/>
            <person name="Zhulin I.B."/>
            <person name="Whitman W.B."/>
            <person name="Mukhopadhyay B."/>
            <person name="Woese C."/>
            <person name="Bristow J."/>
            <person name="Kyrpides N."/>
        </authorList>
    </citation>
    <scope>NUCLEOTIDE SEQUENCE [LARGE SCALE GENOMIC DNA]</scope>
    <source>
        <strain>ATCC 43588 / DSM 3639 / JCM 9404 / F1</strain>
    </source>
</reference>
<reference key="2">
    <citation type="journal article" date="2009" name="Stand. Genomic Sci.">
        <title>Complete genome sequence of Staphylothermus marinus Stetter and Fiala 1986 type strain F1.</title>
        <authorList>
            <person name="Anderson I.J."/>
            <person name="Sun H."/>
            <person name="Lapidus A."/>
            <person name="Copeland A."/>
            <person name="Glavina Del Rio T."/>
            <person name="Tice H."/>
            <person name="Dalin E."/>
            <person name="Lucas S."/>
            <person name="Barry K."/>
            <person name="Land M."/>
            <person name="Richardson P."/>
            <person name="Huber H."/>
            <person name="Kyrpides N.C."/>
        </authorList>
    </citation>
    <scope>NUCLEOTIDE SEQUENCE [LARGE SCALE GENOMIC DNA]</scope>
    <source>
        <strain>ATCC 43588 / DSM 3639 / JCM 9404 / F1</strain>
    </source>
</reference>
<accession>A3DN81</accession>
<feature type="chain" id="PRO_0000350687" description="Geranylgeranylglyceryl phosphate synthase">
    <location>
        <begin position="1"/>
        <end position="245"/>
    </location>
</feature>
<feature type="binding site" evidence="1">
    <location>
        <position position="24"/>
    </location>
    <ligand>
        <name>Mg(2+)</name>
        <dbReference type="ChEBI" id="CHEBI:18420"/>
    </ligand>
</feature>
<feature type="binding site" evidence="1">
    <location>
        <position position="54"/>
    </location>
    <ligand>
        <name>Mg(2+)</name>
        <dbReference type="ChEBI" id="CHEBI:18420"/>
    </ligand>
</feature>
<feature type="binding site" evidence="1">
    <location>
        <begin position="172"/>
        <end position="178"/>
    </location>
    <ligand>
        <name>sn-glycerol 1-phosphate</name>
        <dbReference type="ChEBI" id="CHEBI:57685"/>
    </ligand>
</feature>
<feature type="binding site" evidence="1">
    <location>
        <begin position="203"/>
        <end position="204"/>
    </location>
    <ligand>
        <name>sn-glycerol 1-phosphate</name>
        <dbReference type="ChEBI" id="CHEBI:57685"/>
    </ligand>
</feature>
<feature type="binding site" evidence="1">
    <location>
        <begin position="225"/>
        <end position="226"/>
    </location>
    <ligand>
        <name>sn-glycerol 1-phosphate</name>
        <dbReference type="ChEBI" id="CHEBI:57685"/>
    </ligand>
</feature>
<evidence type="ECO:0000255" key="1">
    <source>
        <dbReference type="HAMAP-Rule" id="MF_00112"/>
    </source>
</evidence>
<keyword id="KW-0963">Cytoplasm</keyword>
<keyword id="KW-0444">Lipid biosynthesis</keyword>
<keyword id="KW-0443">Lipid metabolism</keyword>
<keyword id="KW-0460">Magnesium</keyword>
<keyword id="KW-0479">Metal-binding</keyword>
<keyword id="KW-0594">Phospholipid biosynthesis</keyword>
<keyword id="KW-1208">Phospholipid metabolism</keyword>
<keyword id="KW-1185">Reference proteome</keyword>
<keyword id="KW-0808">Transferase</keyword>
<comment type="function">
    <text evidence="1">Prenyltransferase that catalyzes the transfer of the geranylgeranyl moiety of geranylgeranyl diphosphate (GGPP) to the C3 hydroxyl of sn-glycerol-1-phosphate (G1P). This reaction is the first ether-bond-formation step in the biosynthesis of archaeal membrane lipids.</text>
</comment>
<comment type="catalytic activity">
    <reaction evidence="1">
        <text>sn-glycerol 1-phosphate + (2E,6E,10E)-geranylgeranyl diphosphate = sn-3-O-(geranylgeranyl)glycerol 1-phosphate + diphosphate</text>
        <dbReference type="Rhea" id="RHEA:23404"/>
        <dbReference type="ChEBI" id="CHEBI:33019"/>
        <dbReference type="ChEBI" id="CHEBI:57677"/>
        <dbReference type="ChEBI" id="CHEBI:57685"/>
        <dbReference type="ChEBI" id="CHEBI:58756"/>
        <dbReference type="EC" id="2.5.1.41"/>
    </reaction>
</comment>
<comment type="cofactor">
    <cofactor evidence="1">
        <name>Mg(2+)</name>
        <dbReference type="ChEBI" id="CHEBI:18420"/>
    </cofactor>
</comment>
<comment type="pathway">
    <text evidence="1">Membrane lipid metabolism; glycerophospholipid metabolism.</text>
</comment>
<comment type="subcellular location">
    <subcellularLocation>
        <location evidence="1">Cytoplasm</location>
    </subcellularLocation>
</comment>
<comment type="similarity">
    <text evidence="1">Belongs to the GGGP/HepGP synthase family. Group II subfamily.</text>
</comment>
<gene>
    <name type="ordered locus">Smar_0993</name>
</gene>